<protein>
    <recommendedName>
        <fullName evidence="1">Small ribosomal subunit protein bS20</fullName>
    </recommendedName>
    <alternativeName>
        <fullName evidence="3">30S ribosomal protein S20</fullName>
    </alternativeName>
</protein>
<reference key="1">
    <citation type="journal article" date="2009" name="PLoS Genet.">
        <title>Organised genome dynamics in the Escherichia coli species results in highly diverse adaptive paths.</title>
        <authorList>
            <person name="Touchon M."/>
            <person name="Hoede C."/>
            <person name="Tenaillon O."/>
            <person name="Barbe V."/>
            <person name="Baeriswyl S."/>
            <person name="Bidet P."/>
            <person name="Bingen E."/>
            <person name="Bonacorsi S."/>
            <person name="Bouchier C."/>
            <person name="Bouvet O."/>
            <person name="Calteau A."/>
            <person name="Chiapello H."/>
            <person name="Clermont O."/>
            <person name="Cruveiller S."/>
            <person name="Danchin A."/>
            <person name="Diard M."/>
            <person name="Dossat C."/>
            <person name="Karoui M.E."/>
            <person name="Frapy E."/>
            <person name="Garry L."/>
            <person name="Ghigo J.M."/>
            <person name="Gilles A.M."/>
            <person name="Johnson J."/>
            <person name="Le Bouguenec C."/>
            <person name="Lescat M."/>
            <person name="Mangenot S."/>
            <person name="Martinez-Jehanne V."/>
            <person name="Matic I."/>
            <person name="Nassif X."/>
            <person name="Oztas S."/>
            <person name="Petit M.A."/>
            <person name="Pichon C."/>
            <person name="Rouy Z."/>
            <person name="Ruf C.S."/>
            <person name="Schneider D."/>
            <person name="Tourret J."/>
            <person name="Vacherie B."/>
            <person name="Vallenet D."/>
            <person name="Medigue C."/>
            <person name="Rocha E.P.C."/>
            <person name="Denamur E."/>
        </authorList>
    </citation>
    <scope>NUCLEOTIDE SEQUENCE [LARGE SCALE GENOMIC DNA]</scope>
    <source>
        <strain>UMN026 / ExPEC</strain>
    </source>
</reference>
<gene>
    <name evidence="1" type="primary">rpsT</name>
    <name type="ordered locus">ECUMN_0023</name>
</gene>
<keyword id="KW-0687">Ribonucleoprotein</keyword>
<keyword id="KW-0689">Ribosomal protein</keyword>
<keyword id="KW-0694">RNA-binding</keyword>
<keyword id="KW-0699">rRNA-binding</keyword>
<name>RS20_ECOLU</name>
<proteinExistence type="inferred from homology"/>
<evidence type="ECO:0000255" key="1">
    <source>
        <dbReference type="HAMAP-Rule" id="MF_00500"/>
    </source>
</evidence>
<evidence type="ECO:0000256" key="2">
    <source>
        <dbReference type="SAM" id="MobiDB-lite"/>
    </source>
</evidence>
<evidence type="ECO:0000305" key="3"/>
<dbReference type="EMBL" id="CU928163">
    <property type="protein sequence ID" value="CAR11247.1"/>
    <property type="molecule type" value="Genomic_DNA"/>
</dbReference>
<dbReference type="RefSeq" id="WP_001274021.1">
    <property type="nucleotide sequence ID" value="NC_011751.1"/>
</dbReference>
<dbReference type="RefSeq" id="YP_002410802.1">
    <property type="nucleotide sequence ID" value="NC_011751.1"/>
</dbReference>
<dbReference type="SMR" id="B7N7P7"/>
<dbReference type="STRING" id="585056.ECUMN_0023"/>
<dbReference type="GeneID" id="93777413"/>
<dbReference type="KEGG" id="eum:ECUMN_0023"/>
<dbReference type="PATRIC" id="fig|585056.7.peg.207"/>
<dbReference type="HOGENOM" id="CLU_160655_4_0_6"/>
<dbReference type="Proteomes" id="UP000007097">
    <property type="component" value="Chromosome"/>
</dbReference>
<dbReference type="GO" id="GO:0005829">
    <property type="term" value="C:cytosol"/>
    <property type="evidence" value="ECO:0007669"/>
    <property type="project" value="TreeGrafter"/>
</dbReference>
<dbReference type="GO" id="GO:0015935">
    <property type="term" value="C:small ribosomal subunit"/>
    <property type="evidence" value="ECO:0007669"/>
    <property type="project" value="TreeGrafter"/>
</dbReference>
<dbReference type="GO" id="GO:0070181">
    <property type="term" value="F:small ribosomal subunit rRNA binding"/>
    <property type="evidence" value="ECO:0007669"/>
    <property type="project" value="TreeGrafter"/>
</dbReference>
<dbReference type="GO" id="GO:0003735">
    <property type="term" value="F:structural constituent of ribosome"/>
    <property type="evidence" value="ECO:0007669"/>
    <property type="project" value="InterPro"/>
</dbReference>
<dbReference type="GO" id="GO:0006412">
    <property type="term" value="P:translation"/>
    <property type="evidence" value="ECO:0007669"/>
    <property type="project" value="UniProtKB-UniRule"/>
</dbReference>
<dbReference type="FunFam" id="1.20.58.110:FF:000001">
    <property type="entry name" value="30S ribosomal protein S20"/>
    <property type="match status" value="1"/>
</dbReference>
<dbReference type="Gene3D" id="1.20.58.110">
    <property type="entry name" value="Ribosomal protein S20"/>
    <property type="match status" value="1"/>
</dbReference>
<dbReference type="HAMAP" id="MF_00500">
    <property type="entry name" value="Ribosomal_bS20"/>
    <property type="match status" value="1"/>
</dbReference>
<dbReference type="InterPro" id="IPR002583">
    <property type="entry name" value="Ribosomal_bS20"/>
</dbReference>
<dbReference type="InterPro" id="IPR036510">
    <property type="entry name" value="Ribosomal_bS20_sf"/>
</dbReference>
<dbReference type="NCBIfam" id="TIGR00029">
    <property type="entry name" value="S20"/>
    <property type="match status" value="1"/>
</dbReference>
<dbReference type="PANTHER" id="PTHR33398">
    <property type="entry name" value="30S RIBOSOMAL PROTEIN S20"/>
    <property type="match status" value="1"/>
</dbReference>
<dbReference type="PANTHER" id="PTHR33398:SF1">
    <property type="entry name" value="SMALL RIBOSOMAL SUBUNIT PROTEIN BS20C"/>
    <property type="match status" value="1"/>
</dbReference>
<dbReference type="Pfam" id="PF01649">
    <property type="entry name" value="Ribosomal_S20p"/>
    <property type="match status" value="1"/>
</dbReference>
<dbReference type="SUPFAM" id="SSF46992">
    <property type="entry name" value="Ribosomal protein S20"/>
    <property type="match status" value="1"/>
</dbReference>
<comment type="function">
    <text evidence="1">Binds directly to 16S ribosomal RNA.</text>
</comment>
<comment type="similarity">
    <text evidence="1">Belongs to the bacterial ribosomal protein bS20 family.</text>
</comment>
<sequence length="87" mass="9684">MANIKSAKKRAIQSEKARKHNASRRSMMRTFIKKVYAAIEAGDKAAAQKAFNEMQPIVDRQAAKGLIHKNKAARHKANLTAQINKLA</sequence>
<accession>B7N7P7</accession>
<organism>
    <name type="scientific">Escherichia coli O17:K52:H18 (strain UMN026 / ExPEC)</name>
    <dbReference type="NCBI Taxonomy" id="585056"/>
    <lineage>
        <taxon>Bacteria</taxon>
        <taxon>Pseudomonadati</taxon>
        <taxon>Pseudomonadota</taxon>
        <taxon>Gammaproteobacteria</taxon>
        <taxon>Enterobacterales</taxon>
        <taxon>Enterobacteriaceae</taxon>
        <taxon>Escherichia</taxon>
    </lineage>
</organism>
<feature type="chain" id="PRO_1000126443" description="Small ribosomal subunit protein bS20">
    <location>
        <begin position="1"/>
        <end position="87"/>
    </location>
</feature>
<feature type="region of interest" description="Disordered" evidence="2">
    <location>
        <begin position="1"/>
        <end position="26"/>
    </location>
</feature>